<sequence length="299" mass="32396">MEEVEISTEKKSNPVKSFIAGGVGGMCNVLVGHPLDTIKVRLQTMPTPPPGQPPRYKGVIDCAARTFRYEGFRGFYRGISAPLVGVTPIYAVDFAVYAAGKRLFQTDDHIRLTYPQIFAAGALAGVCSALVTVPTDRIKVLLQTQTVSNGPLLYNGTIDTAAKLYRQGGIRSLFKGTCACILRDSPTGFYFVTYEFLQELARKKSANGKISTTSTILSGGTAGIVFWTLAVPFDVLKSRLQSAPEGTYKHGIRSVFRNLMATEGPKALFRGILPILLRAFPSTAAVFFGVELTNDLLKA</sequence>
<gene>
    <name evidence="5" type="primary">MME1</name>
    <name evidence="8" type="ORF">CG3476</name>
</gene>
<keyword id="KW-0460">Magnesium</keyword>
<keyword id="KW-0472">Membrane</keyword>
<keyword id="KW-0496">Mitochondrion</keyword>
<keyword id="KW-1185">Reference proteome</keyword>
<keyword id="KW-0677">Repeat</keyword>
<keyword id="KW-0812">Transmembrane</keyword>
<keyword id="KW-1133">Transmembrane helix</keyword>
<keyword id="KW-0813">Transport</keyword>
<reference evidence="7" key="1">
    <citation type="journal article" date="2000" name="Science">
        <title>The genome sequence of Drosophila melanogaster.</title>
        <authorList>
            <person name="Adams M.D."/>
            <person name="Celniker S.E."/>
            <person name="Holt R.A."/>
            <person name="Evans C.A."/>
            <person name="Gocayne J.D."/>
            <person name="Amanatides P.G."/>
            <person name="Scherer S.E."/>
            <person name="Li P.W."/>
            <person name="Hoskins R.A."/>
            <person name="Galle R.F."/>
            <person name="George R.A."/>
            <person name="Lewis S.E."/>
            <person name="Richards S."/>
            <person name="Ashburner M."/>
            <person name="Henderson S.N."/>
            <person name="Sutton G.G."/>
            <person name="Wortman J.R."/>
            <person name="Yandell M.D."/>
            <person name="Zhang Q."/>
            <person name="Chen L.X."/>
            <person name="Brandon R.C."/>
            <person name="Rogers Y.-H.C."/>
            <person name="Blazej R.G."/>
            <person name="Champe M."/>
            <person name="Pfeiffer B.D."/>
            <person name="Wan K.H."/>
            <person name="Doyle C."/>
            <person name="Baxter E.G."/>
            <person name="Helt G."/>
            <person name="Nelson C.R."/>
            <person name="Miklos G.L.G."/>
            <person name="Abril J.F."/>
            <person name="Agbayani A."/>
            <person name="An H.-J."/>
            <person name="Andrews-Pfannkoch C."/>
            <person name="Baldwin D."/>
            <person name="Ballew R.M."/>
            <person name="Basu A."/>
            <person name="Baxendale J."/>
            <person name="Bayraktaroglu L."/>
            <person name="Beasley E.M."/>
            <person name="Beeson K.Y."/>
            <person name="Benos P.V."/>
            <person name="Berman B.P."/>
            <person name="Bhandari D."/>
            <person name="Bolshakov S."/>
            <person name="Borkova D."/>
            <person name="Botchan M.R."/>
            <person name="Bouck J."/>
            <person name="Brokstein P."/>
            <person name="Brottier P."/>
            <person name="Burtis K.C."/>
            <person name="Busam D.A."/>
            <person name="Butler H."/>
            <person name="Cadieu E."/>
            <person name="Center A."/>
            <person name="Chandra I."/>
            <person name="Cherry J.M."/>
            <person name="Cawley S."/>
            <person name="Dahlke C."/>
            <person name="Davenport L.B."/>
            <person name="Davies P."/>
            <person name="de Pablos B."/>
            <person name="Delcher A."/>
            <person name="Deng Z."/>
            <person name="Mays A.D."/>
            <person name="Dew I."/>
            <person name="Dietz S.M."/>
            <person name="Dodson K."/>
            <person name="Doup L.E."/>
            <person name="Downes M."/>
            <person name="Dugan-Rocha S."/>
            <person name="Dunkov B.C."/>
            <person name="Dunn P."/>
            <person name="Durbin K.J."/>
            <person name="Evangelista C.C."/>
            <person name="Ferraz C."/>
            <person name="Ferriera S."/>
            <person name="Fleischmann W."/>
            <person name="Fosler C."/>
            <person name="Gabrielian A.E."/>
            <person name="Garg N.S."/>
            <person name="Gelbart W.M."/>
            <person name="Glasser K."/>
            <person name="Glodek A."/>
            <person name="Gong F."/>
            <person name="Gorrell J.H."/>
            <person name="Gu Z."/>
            <person name="Guan P."/>
            <person name="Harris M."/>
            <person name="Harris N.L."/>
            <person name="Harvey D.A."/>
            <person name="Heiman T.J."/>
            <person name="Hernandez J.R."/>
            <person name="Houck J."/>
            <person name="Hostin D."/>
            <person name="Houston K.A."/>
            <person name="Howland T.J."/>
            <person name="Wei M.-H."/>
            <person name="Ibegwam C."/>
            <person name="Jalali M."/>
            <person name="Kalush F."/>
            <person name="Karpen G.H."/>
            <person name="Ke Z."/>
            <person name="Kennison J.A."/>
            <person name="Ketchum K.A."/>
            <person name="Kimmel B.E."/>
            <person name="Kodira C.D."/>
            <person name="Kraft C.L."/>
            <person name="Kravitz S."/>
            <person name="Kulp D."/>
            <person name="Lai Z."/>
            <person name="Lasko P."/>
            <person name="Lei Y."/>
            <person name="Levitsky A.A."/>
            <person name="Li J.H."/>
            <person name="Li Z."/>
            <person name="Liang Y."/>
            <person name="Lin X."/>
            <person name="Liu X."/>
            <person name="Mattei B."/>
            <person name="McIntosh T.C."/>
            <person name="McLeod M.P."/>
            <person name="McPherson D."/>
            <person name="Merkulov G."/>
            <person name="Milshina N.V."/>
            <person name="Mobarry C."/>
            <person name="Morris J."/>
            <person name="Moshrefi A."/>
            <person name="Mount S.M."/>
            <person name="Moy M."/>
            <person name="Murphy B."/>
            <person name="Murphy L."/>
            <person name="Muzny D.M."/>
            <person name="Nelson D.L."/>
            <person name="Nelson D.R."/>
            <person name="Nelson K.A."/>
            <person name="Nixon K."/>
            <person name="Nusskern D.R."/>
            <person name="Pacleb J.M."/>
            <person name="Palazzolo M."/>
            <person name="Pittman G.S."/>
            <person name="Pan S."/>
            <person name="Pollard J."/>
            <person name="Puri V."/>
            <person name="Reese M.G."/>
            <person name="Reinert K."/>
            <person name="Remington K."/>
            <person name="Saunders R.D.C."/>
            <person name="Scheeler F."/>
            <person name="Shen H."/>
            <person name="Shue B.C."/>
            <person name="Siden-Kiamos I."/>
            <person name="Simpson M."/>
            <person name="Skupski M.P."/>
            <person name="Smith T.J."/>
            <person name="Spier E."/>
            <person name="Spradling A.C."/>
            <person name="Stapleton M."/>
            <person name="Strong R."/>
            <person name="Sun E."/>
            <person name="Svirskas R."/>
            <person name="Tector C."/>
            <person name="Turner R."/>
            <person name="Venter E."/>
            <person name="Wang A.H."/>
            <person name="Wang X."/>
            <person name="Wang Z.-Y."/>
            <person name="Wassarman D.A."/>
            <person name="Weinstock G.M."/>
            <person name="Weissenbach J."/>
            <person name="Williams S.M."/>
            <person name="Woodage T."/>
            <person name="Worley K.C."/>
            <person name="Wu D."/>
            <person name="Yang S."/>
            <person name="Yao Q.A."/>
            <person name="Ye J."/>
            <person name="Yeh R.-F."/>
            <person name="Zaveri J.S."/>
            <person name="Zhan M."/>
            <person name="Zhang G."/>
            <person name="Zhao Q."/>
            <person name="Zheng L."/>
            <person name="Zheng X.H."/>
            <person name="Zhong F.N."/>
            <person name="Zhong W."/>
            <person name="Zhou X."/>
            <person name="Zhu S.C."/>
            <person name="Zhu X."/>
            <person name="Smith H.O."/>
            <person name="Gibbs R.A."/>
            <person name="Myers E.W."/>
            <person name="Rubin G.M."/>
            <person name="Venter J.C."/>
        </authorList>
    </citation>
    <scope>NUCLEOTIDE SEQUENCE [LARGE SCALE GENOMIC DNA]</scope>
    <source>
        <strain evidence="9">Berkeley</strain>
    </source>
</reference>
<reference evidence="7" key="2">
    <citation type="journal article" date="2002" name="Genome Biol.">
        <title>Annotation of the Drosophila melanogaster euchromatic genome: a systematic review.</title>
        <authorList>
            <person name="Misra S."/>
            <person name="Crosby M.A."/>
            <person name="Mungall C.J."/>
            <person name="Matthews B.B."/>
            <person name="Campbell K.S."/>
            <person name="Hradecky P."/>
            <person name="Huang Y."/>
            <person name="Kaminker J.S."/>
            <person name="Millburn G.H."/>
            <person name="Prochnik S.E."/>
            <person name="Smith C.D."/>
            <person name="Tupy J.L."/>
            <person name="Whitfield E.J."/>
            <person name="Bayraktaroglu L."/>
            <person name="Berman B.P."/>
            <person name="Bettencourt B.R."/>
            <person name="Celniker S.E."/>
            <person name="de Grey A.D.N.J."/>
            <person name="Drysdale R.A."/>
            <person name="Harris N.L."/>
            <person name="Richter J."/>
            <person name="Russo S."/>
            <person name="Schroeder A.J."/>
            <person name="Shu S.Q."/>
            <person name="Stapleton M."/>
            <person name="Yamada C."/>
            <person name="Ashburner M."/>
            <person name="Gelbart W.M."/>
            <person name="Rubin G.M."/>
            <person name="Lewis S.E."/>
        </authorList>
    </citation>
    <scope>GENOME REANNOTATION</scope>
    <source>
        <strain evidence="9">Berkeley</strain>
    </source>
</reference>
<reference evidence="7" key="3">
    <citation type="journal article" date="2002" name="Genome Biol.">
        <title>A Drosophila full-length cDNA resource.</title>
        <authorList>
            <person name="Stapleton M."/>
            <person name="Carlson J.W."/>
            <person name="Brokstein P."/>
            <person name="Yu C."/>
            <person name="Champe M."/>
            <person name="George R.A."/>
            <person name="Guarin H."/>
            <person name="Kronmiller B."/>
            <person name="Pacleb J.M."/>
            <person name="Park S."/>
            <person name="Wan K.H."/>
            <person name="Rubin G.M."/>
            <person name="Celniker S.E."/>
        </authorList>
    </citation>
    <scope>NUCLEOTIDE SEQUENCE [LARGE SCALE MRNA]</scope>
    <source>
        <strain evidence="9">Berkeley</strain>
        <tissue evidence="7">Embryo</tissue>
    </source>
</reference>
<reference evidence="6" key="4">
    <citation type="journal article" date="2016" name="Biochim. Biophys. Acta">
        <title>A novel Drosophila mitochondrial carrier protein acts as a Mg(2+) exporter in fine-tuning mitochondrial Mg(2+) homeostasis.</title>
        <authorList>
            <person name="Cui Y."/>
            <person name="Zhao S."/>
            <person name="Wang X."/>
            <person name="Zhou B."/>
        </authorList>
    </citation>
    <scope>FUNCTION</scope>
    <scope>SUBCELLULAR LOCATION</scope>
    <scope>DISRUPTION PHENOTYPE</scope>
</reference>
<organism evidence="9">
    <name type="scientific">Drosophila melanogaster</name>
    <name type="common">Fruit fly</name>
    <dbReference type="NCBI Taxonomy" id="7227"/>
    <lineage>
        <taxon>Eukaryota</taxon>
        <taxon>Metazoa</taxon>
        <taxon>Ecdysozoa</taxon>
        <taxon>Arthropoda</taxon>
        <taxon>Hexapoda</taxon>
        <taxon>Insecta</taxon>
        <taxon>Pterygota</taxon>
        <taxon>Neoptera</taxon>
        <taxon>Endopterygota</taxon>
        <taxon>Diptera</taxon>
        <taxon>Brachycera</taxon>
        <taxon>Muscomorpha</taxon>
        <taxon>Ephydroidea</taxon>
        <taxon>Drosophilidae</taxon>
        <taxon>Drosophila</taxon>
        <taxon>Sophophora</taxon>
    </lineage>
</organism>
<accession>Q9VM51</accession>
<evidence type="ECO:0000255" key="1"/>
<evidence type="ECO:0000255" key="2">
    <source>
        <dbReference type="PROSITE-ProRule" id="PRU00282"/>
    </source>
</evidence>
<evidence type="ECO:0000255" key="3">
    <source>
        <dbReference type="RuleBase" id="RU000488"/>
    </source>
</evidence>
<evidence type="ECO:0000269" key="4">
    <source>
    </source>
</evidence>
<evidence type="ECO:0000303" key="5">
    <source>
    </source>
</evidence>
<evidence type="ECO:0000305" key="6"/>
<evidence type="ECO:0000312" key="7">
    <source>
        <dbReference type="EMBL" id="AAL39736.1"/>
    </source>
</evidence>
<evidence type="ECO:0000312" key="8">
    <source>
        <dbReference type="FlyBase" id="FBgn0031881"/>
    </source>
</evidence>
<evidence type="ECO:0000312" key="9">
    <source>
        <dbReference type="Proteomes" id="UP000000803"/>
    </source>
</evidence>
<feature type="chain" id="PRO_0000439277" description="Mitochondrial magnesium exporter 1">
    <location>
        <begin position="1"/>
        <end position="299"/>
    </location>
</feature>
<feature type="transmembrane region" description="Helical; Name=1" evidence="1">
    <location>
        <begin position="79"/>
        <end position="99"/>
    </location>
</feature>
<feature type="transmembrane region" description="Helical; Name=2" evidence="1">
    <location>
        <begin position="114"/>
        <end position="134"/>
    </location>
</feature>
<feature type="transmembrane region" description="Helical; Name=3" evidence="1">
    <location>
        <begin position="216"/>
        <end position="236"/>
    </location>
</feature>
<feature type="transmembrane region" description="Helical; Name=4" evidence="1">
    <location>
        <begin position="272"/>
        <end position="292"/>
    </location>
</feature>
<feature type="repeat" description="Solcar 1" evidence="2">
    <location>
        <begin position="12"/>
        <end position="103"/>
    </location>
</feature>
<feature type="repeat" description="Solcar 2" evidence="2">
    <location>
        <begin position="112"/>
        <end position="200"/>
    </location>
</feature>
<feature type="repeat" description="Solcar 3" evidence="2">
    <location>
        <begin position="210"/>
        <end position="296"/>
    </location>
</feature>
<protein>
    <recommendedName>
        <fullName evidence="5">Mitochondrial magnesium exporter 1</fullName>
    </recommendedName>
</protein>
<dbReference type="EMBL" id="AE014134">
    <property type="protein sequence ID" value="AAF52476.1"/>
    <property type="molecule type" value="Genomic_DNA"/>
</dbReference>
<dbReference type="EMBL" id="AY069591">
    <property type="protein sequence ID" value="AAL39736.1"/>
    <property type="molecule type" value="mRNA"/>
</dbReference>
<dbReference type="RefSeq" id="NP_609093.1">
    <property type="nucleotide sequence ID" value="NM_135249.3"/>
</dbReference>
<dbReference type="SMR" id="Q9VM51"/>
<dbReference type="FunCoup" id="Q9VM51">
    <property type="interactions" value="1133"/>
</dbReference>
<dbReference type="IntAct" id="Q9VM51">
    <property type="interactions" value="5"/>
</dbReference>
<dbReference type="STRING" id="7227.FBpp0079017"/>
<dbReference type="TCDB" id="2.A.29.8.15">
    <property type="family name" value="the mitochondrial carrier (mc) family"/>
</dbReference>
<dbReference type="GlyGen" id="Q9VM51">
    <property type="glycosylation" value="1 site"/>
</dbReference>
<dbReference type="PaxDb" id="7227-FBpp0079017"/>
<dbReference type="DNASU" id="33987"/>
<dbReference type="EnsemblMetazoa" id="FBtr0079389">
    <property type="protein sequence ID" value="FBpp0079017"/>
    <property type="gene ID" value="FBgn0031881"/>
</dbReference>
<dbReference type="GeneID" id="33987"/>
<dbReference type="KEGG" id="dme:Dmel_CG3476"/>
<dbReference type="UCSC" id="CG3476-RA">
    <property type="organism name" value="d. melanogaster"/>
</dbReference>
<dbReference type="AGR" id="FB:FBgn0031881"/>
<dbReference type="CTD" id="33987"/>
<dbReference type="FlyBase" id="FBgn0031881">
    <property type="gene designation" value="MME1"/>
</dbReference>
<dbReference type="VEuPathDB" id="VectorBase:FBgn0031881"/>
<dbReference type="eggNOG" id="KOG0758">
    <property type="taxonomic scope" value="Eukaryota"/>
</dbReference>
<dbReference type="GeneTree" id="ENSGT00940000167609"/>
<dbReference type="HOGENOM" id="CLU_015166_16_0_1"/>
<dbReference type="InParanoid" id="Q9VM51"/>
<dbReference type="OMA" id="GVGGMCN"/>
<dbReference type="OrthoDB" id="14252at2759"/>
<dbReference type="PhylomeDB" id="Q9VM51"/>
<dbReference type="BioGRID-ORCS" id="33987">
    <property type="hits" value="0 hits in 3 CRISPR screens"/>
</dbReference>
<dbReference type="GenomeRNAi" id="33987"/>
<dbReference type="PRO" id="PR:Q9VM51"/>
<dbReference type="Proteomes" id="UP000000803">
    <property type="component" value="Chromosome 2L"/>
</dbReference>
<dbReference type="Bgee" id="FBgn0031881">
    <property type="expression patterns" value="Expressed in adult tracheocyte (Drosophila) in open tracheal system trachea and 84 other cell types or tissues"/>
</dbReference>
<dbReference type="ExpressionAtlas" id="Q9VM51">
    <property type="expression patterns" value="baseline and differential"/>
</dbReference>
<dbReference type="GO" id="GO:0005740">
    <property type="term" value="C:mitochondrial envelope"/>
    <property type="evidence" value="ECO:0000318"/>
    <property type="project" value="GO_Central"/>
</dbReference>
<dbReference type="GO" id="GO:0005743">
    <property type="term" value="C:mitochondrial inner membrane"/>
    <property type="evidence" value="ECO:0000316"/>
    <property type="project" value="FlyBase"/>
</dbReference>
<dbReference type="GO" id="GO:0015095">
    <property type="term" value="F:magnesium ion transmembrane transporter activity"/>
    <property type="evidence" value="ECO:0000314"/>
    <property type="project" value="FlyBase"/>
</dbReference>
<dbReference type="GO" id="GO:0015227">
    <property type="term" value="F:O-acyl-L-carnitine transmembrane transporter activity"/>
    <property type="evidence" value="ECO:0000318"/>
    <property type="project" value="GO_Central"/>
</dbReference>
<dbReference type="GO" id="GO:1902603">
    <property type="term" value="P:carnitine transmembrane transport"/>
    <property type="evidence" value="ECO:0000318"/>
    <property type="project" value="GO_Central"/>
</dbReference>
<dbReference type="GO" id="GO:0010961">
    <property type="term" value="P:intracellular magnesium ion homeostasis"/>
    <property type="evidence" value="ECO:0000314"/>
    <property type="project" value="FlyBase"/>
</dbReference>
<dbReference type="GO" id="GO:1990616">
    <property type="term" value="P:magnesium ion export from mitochondrion"/>
    <property type="evidence" value="ECO:0000314"/>
    <property type="project" value="FlyBase"/>
</dbReference>
<dbReference type="GO" id="GO:0006839">
    <property type="term" value="P:mitochondrial transport"/>
    <property type="evidence" value="ECO:0000318"/>
    <property type="project" value="GO_Central"/>
</dbReference>
<dbReference type="FunFam" id="1.50.40.10:FF:000051">
    <property type="entry name" value="Mitochondrial carnitine/acylcarnitine carrier protein"/>
    <property type="match status" value="1"/>
</dbReference>
<dbReference type="FunFam" id="1.50.40.10:FF:000040">
    <property type="entry name" value="mitochondrial carnitine/acylcarnitine carrier protein"/>
    <property type="match status" value="1"/>
</dbReference>
<dbReference type="Gene3D" id="1.50.40.10">
    <property type="entry name" value="Mitochondrial carrier domain"/>
    <property type="match status" value="2"/>
</dbReference>
<dbReference type="InterPro" id="IPR002067">
    <property type="entry name" value="Mit_carrier"/>
</dbReference>
<dbReference type="InterPro" id="IPR050567">
    <property type="entry name" value="Mitochondrial_Carrier"/>
</dbReference>
<dbReference type="InterPro" id="IPR018108">
    <property type="entry name" value="Mitochondrial_sb/sol_carrier"/>
</dbReference>
<dbReference type="InterPro" id="IPR023395">
    <property type="entry name" value="Mt_carrier_dom_sf"/>
</dbReference>
<dbReference type="PANTHER" id="PTHR45624:SF4">
    <property type="entry name" value="CONGESTED-LIKE TRACHEA PROTEIN-RELATED"/>
    <property type="match status" value="1"/>
</dbReference>
<dbReference type="PANTHER" id="PTHR45624">
    <property type="entry name" value="MITOCHONDRIAL BASIC AMINO ACIDS TRANSPORTER-RELATED"/>
    <property type="match status" value="1"/>
</dbReference>
<dbReference type="Pfam" id="PF00153">
    <property type="entry name" value="Mito_carr"/>
    <property type="match status" value="3"/>
</dbReference>
<dbReference type="PRINTS" id="PR00926">
    <property type="entry name" value="MITOCARRIER"/>
</dbReference>
<dbReference type="SUPFAM" id="SSF103506">
    <property type="entry name" value="Mitochondrial carrier"/>
    <property type="match status" value="1"/>
</dbReference>
<dbReference type="PROSITE" id="PS50920">
    <property type="entry name" value="SOLCAR"/>
    <property type="match status" value="3"/>
</dbReference>
<proteinExistence type="evidence at transcript level"/>
<comment type="function">
    <text evidence="4">Mediates efflux of magnesium ions from mitochondria, suggesting a role in magnesium homeostasis.</text>
</comment>
<comment type="subcellular location">
    <subcellularLocation>
        <location evidence="4">Mitochondrion membrane</location>
        <topology evidence="1">Multi-pass membrane protein</topology>
    </subcellularLocation>
</comment>
<comment type="disruption phenotype">
    <text evidence="4">RNAi-mediated knockdown results in accumulation of magnesium ions in mitochondria, and reduced lifespan. A magnesium-deficient diet rescues the reduced lifespan phenotype.</text>
</comment>
<comment type="similarity">
    <text evidence="3 6">Belongs to the mitochondrial carrier (TC 2.A.29) family.</text>
</comment>
<name>MME1_DROME</name>